<keyword id="KW-0687">Ribonucleoprotein</keyword>
<keyword id="KW-0689">Ribosomal protein</keyword>
<dbReference type="EMBL" id="CP000867">
    <property type="protein sequence ID" value="ABX01616.1"/>
    <property type="molecule type" value="Genomic_DNA"/>
</dbReference>
<dbReference type="SMR" id="A9A8E3"/>
<dbReference type="STRING" id="444158.MmarC6_0799"/>
<dbReference type="KEGG" id="mmx:MmarC6_0799"/>
<dbReference type="eggNOG" id="arCOG04049">
    <property type="taxonomic scope" value="Archaea"/>
</dbReference>
<dbReference type="HOGENOM" id="CLU_205640_0_0_2"/>
<dbReference type="OrthoDB" id="45138at2157"/>
<dbReference type="PhylomeDB" id="A9A8E3"/>
<dbReference type="GO" id="GO:1990904">
    <property type="term" value="C:ribonucleoprotein complex"/>
    <property type="evidence" value="ECO:0007669"/>
    <property type="project" value="UniProtKB-KW"/>
</dbReference>
<dbReference type="GO" id="GO:0005840">
    <property type="term" value="C:ribosome"/>
    <property type="evidence" value="ECO:0007669"/>
    <property type="project" value="UniProtKB-KW"/>
</dbReference>
<dbReference type="GO" id="GO:0003735">
    <property type="term" value="F:structural constituent of ribosome"/>
    <property type="evidence" value="ECO:0007669"/>
    <property type="project" value="InterPro"/>
</dbReference>
<dbReference type="GO" id="GO:0006412">
    <property type="term" value="P:translation"/>
    <property type="evidence" value="ECO:0007669"/>
    <property type="project" value="UniProtKB-UniRule"/>
</dbReference>
<dbReference type="Gene3D" id="4.10.1060.50">
    <property type="match status" value="1"/>
</dbReference>
<dbReference type="HAMAP" id="MF_00788">
    <property type="entry name" value="Ribosomal_eL40"/>
    <property type="match status" value="1"/>
</dbReference>
<dbReference type="InterPro" id="IPR023657">
    <property type="entry name" value="Ribosomal_eL40_arc"/>
</dbReference>
<dbReference type="InterPro" id="IPR001975">
    <property type="entry name" value="Ribosomal_eL40_dom"/>
</dbReference>
<dbReference type="InterPro" id="IPR038587">
    <property type="entry name" value="Ribosomal_eL40_sf"/>
</dbReference>
<dbReference type="InterPro" id="IPR011332">
    <property type="entry name" value="Ribosomal_zn-bd"/>
</dbReference>
<dbReference type="NCBIfam" id="NF003161">
    <property type="entry name" value="PRK04136.1"/>
    <property type="match status" value="1"/>
</dbReference>
<dbReference type="PANTHER" id="PTHR39649">
    <property type="entry name" value="50S RIBOSOMAL PROTEIN L40E"/>
    <property type="match status" value="1"/>
</dbReference>
<dbReference type="PANTHER" id="PTHR39649:SF1">
    <property type="entry name" value="LARGE RIBOSOMAL SUBUNIT PROTEIN EL40"/>
    <property type="match status" value="1"/>
</dbReference>
<dbReference type="Pfam" id="PF01020">
    <property type="entry name" value="Ribosomal_L40e"/>
    <property type="match status" value="1"/>
</dbReference>
<dbReference type="SMART" id="SM01377">
    <property type="entry name" value="Ribosomal_L40e"/>
    <property type="match status" value="1"/>
</dbReference>
<dbReference type="SUPFAM" id="SSF57829">
    <property type="entry name" value="Zn-binding ribosomal proteins"/>
    <property type="match status" value="1"/>
</dbReference>
<name>RL40_METM6</name>
<reference key="1">
    <citation type="submission" date="2007-10" db="EMBL/GenBank/DDBJ databases">
        <title>Complete sequence of Methanococcus maripaludis C6.</title>
        <authorList>
            <consortium name="US DOE Joint Genome Institute"/>
            <person name="Copeland A."/>
            <person name="Lucas S."/>
            <person name="Lapidus A."/>
            <person name="Barry K."/>
            <person name="Glavina del Rio T."/>
            <person name="Dalin E."/>
            <person name="Tice H."/>
            <person name="Pitluck S."/>
            <person name="Clum A."/>
            <person name="Schmutz J."/>
            <person name="Larimer F."/>
            <person name="Land M."/>
            <person name="Hauser L."/>
            <person name="Kyrpides N."/>
            <person name="Mikhailova N."/>
            <person name="Sieprawska-Lupa M."/>
            <person name="Whitman W.B."/>
            <person name="Richardson P."/>
        </authorList>
    </citation>
    <scope>NUCLEOTIDE SEQUENCE [LARGE SCALE GENOMIC DNA]</scope>
    <source>
        <strain>C6 / ATCC BAA-1332</strain>
    </source>
</reference>
<evidence type="ECO:0000255" key="1">
    <source>
        <dbReference type="HAMAP-Rule" id="MF_00788"/>
    </source>
</evidence>
<evidence type="ECO:0000305" key="2"/>
<gene>
    <name evidence="1" type="primary">rpl40e</name>
    <name type="ordered locus">MmarC6_0799</name>
</gene>
<organism>
    <name type="scientific">Methanococcus maripaludis (strain C6 / ATCC BAA-1332)</name>
    <dbReference type="NCBI Taxonomy" id="444158"/>
    <lineage>
        <taxon>Archaea</taxon>
        <taxon>Methanobacteriati</taxon>
        <taxon>Methanobacteriota</taxon>
        <taxon>Methanomada group</taxon>
        <taxon>Methanococci</taxon>
        <taxon>Methanococcales</taxon>
        <taxon>Methanococcaceae</taxon>
        <taxon>Methanococcus</taxon>
    </lineage>
</organism>
<comment type="similarity">
    <text evidence="1">Belongs to the eukaryotic ribosomal protein eL40 family.</text>
</comment>
<accession>A9A8E3</accession>
<proteinExistence type="inferred from homology"/>
<sequence length="47" mass="5528">MAFEEAIKRVFMKKICMKCNSRNSWKATKCRKCGYTNLRPKAKEARA</sequence>
<feature type="chain" id="PRO_1000133752" description="Large ribosomal subunit protein eL40">
    <location>
        <begin position="1"/>
        <end position="47"/>
    </location>
</feature>
<protein>
    <recommendedName>
        <fullName evidence="1">Large ribosomal subunit protein eL40</fullName>
    </recommendedName>
    <alternativeName>
        <fullName evidence="2">50S ribosomal protein L40e</fullName>
    </alternativeName>
</protein>